<gene>
    <name type="primary">med6</name>
    <name type="ORF">zgc:86933</name>
</gene>
<evidence type="ECO:0000250" key="1"/>
<evidence type="ECO:0000256" key="2">
    <source>
        <dbReference type="SAM" id="MobiDB-lite"/>
    </source>
</evidence>
<evidence type="ECO:0000305" key="3"/>
<comment type="function">
    <text evidence="1">Component of the Mediator complex, a coactivator involved in the regulated transcription of nearly all RNA polymerase II-dependent genes. Mediator functions as a bridge to convey information from gene-specific regulatory proteins to the basal RNA polymerase II transcription machinery. Mediator is recruited to promoters by direct interactions with regulatory proteins and serves as a scaffold for the assembly of a functional preinitiation complex with RNA polymerase II and the general transcription factors (By similarity).</text>
</comment>
<comment type="subunit">
    <text evidence="1">Component of the Mediator complex.</text>
</comment>
<comment type="subcellular location">
    <subcellularLocation>
        <location evidence="1">Nucleus</location>
    </subcellularLocation>
</comment>
<comment type="similarity">
    <text evidence="3">Belongs to the Mediator complex subunit 6 family.</text>
</comment>
<name>MED6_DANRE</name>
<sequence length="254" mass="29250">MATVDLRDNLLGISWVDSGWVPILNPSNVLEYFSERSNPFYDRTCNNEVVKMQRSTLDHLTQLVGVEYILLHTQEPILYIIRKQQRQSPTQVIPLADYYIIAGVVYQAPDLGSVISSRALSAVHGIQSAFDEAMSFCRYHPSKGYWWHFKDQEEKERVKPKSKRKEEPSSLFQRQRVDTLLLDLRNKFPPTFYQTKPGEKPVPVEVKKEPEVPVETVKPQEERETKPPAPPAPPRPPPQTTPNKPPPEKRARVQ</sequence>
<dbReference type="EMBL" id="BC071547">
    <property type="protein sequence ID" value="AAH71547.1"/>
    <property type="molecule type" value="mRNA"/>
</dbReference>
<dbReference type="RefSeq" id="NP_001002084.1">
    <property type="nucleotide sequence ID" value="NM_001002084.1"/>
</dbReference>
<dbReference type="SMR" id="Q6IQ63"/>
<dbReference type="FunCoup" id="Q6IQ63">
    <property type="interactions" value="1819"/>
</dbReference>
<dbReference type="STRING" id="7955.ENSDARP00000044114"/>
<dbReference type="PaxDb" id="7955-ENSDARP00000044114"/>
<dbReference type="Ensembl" id="ENSDART00000044115">
    <property type="protein sequence ID" value="ENSDARP00000044114"/>
    <property type="gene ID" value="ENSDARG00000034734"/>
</dbReference>
<dbReference type="GeneID" id="415174"/>
<dbReference type="KEGG" id="dre:415174"/>
<dbReference type="AGR" id="ZFIN:ZDB-GENE-040625-61"/>
<dbReference type="CTD" id="10001"/>
<dbReference type="ZFIN" id="ZDB-GENE-040625-61">
    <property type="gene designation" value="med6"/>
</dbReference>
<dbReference type="eggNOG" id="KOG3169">
    <property type="taxonomic scope" value="Eukaryota"/>
</dbReference>
<dbReference type="HOGENOM" id="CLU_077754_1_0_1"/>
<dbReference type="InParanoid" id="Q6IQ63"/>
<dbReference type="OMA" id="KKDMKPP"/>
<dbReference type="OrthoDB" id="344220at2759"/>
<dbReference type="PhylomeDB" id="Q6IQ63"/>
<dbReference type="TreeFam" id="TF313577"/>
<dbReference type="PRO" id="PR:Q6IQ63"/>
<dbReference type="Proteomes" id="UP000000437">
    <property type="component" value="Chromosome 13"/>
</dbReference>
<dbReference type="Bgee" id="ENSDARG00000034734">
    <property type="expression patterns" value="Expressed in gastrula and 29 other cell types or tissues"/>
</dbReference>
<dbReference type="ExpressionAtlas" id="Q6IQ63">
    <property type="expression patterns" value="baseline"/>
</dbReference>
<dbReference type="GO" id="GO:0070847">
    <property type="term" value="C:core mediator complex"/>
    <property type="evidence" value="ECO:0000318"/>
    <property type="project" value="GO_Central"/>
</dbReference>
<dbReference type="GO" id="GO:0016592">
    <property type="term" value="C:mediator complex"/>
    <property type="evidence" value="ECO:0000318"/>
    <property type="project" value="GO_Central"/>
</dbReference>
<dbReference type="GO" id="GO:0003713">
    <property type="term" value="F:transcription coactivator activity"/>
    <property type="evidence" value="ECO:0000318"/>
    <property type="project" value="GO_Central"/>
</dbReference>
<dbReference type="GO" id="GO:0006357">
    <property type="term" value="P:regulation of transcription by RNA polymerase II"/>
    <property type="evidence" value="ECO:0000318"/>
    <property type="project" value="GO_Central"/>
</dbReference>
<dbReference type="FunFam" id="3.10.450.580:FF:000001">
    <property type="entry name" value="Mediator of RNA polymerase II transcription subunit 6"/>
    <property type="match status" value="1"/>
</dbReference>
<dbReference type="Gene3D" id="3.10.450.580">
    <property type="entry name" value="Mediator complex, subunit Med6"/>
    <property type="match status" value="1"/>
</dbReference>
<dbReference type="InterPro" id="IPR007018">
    <property type="entry name" value="Mediator_Med6"/>
</dbReference>
<dbReference type="InterPro" id="IPR016820">
    <property type="entry name" value="Mediator_Med6_met/pln"/>
</dbReference>
<dbReference type="InterPro" id="IPR038566">
    <property type="entry name" value="Mediator_Med6_sf"/>
</dbReference>
<dbReference type="PANTHER" id="PTHR13104">
    <property type="entry name" value="MED-6-RELATED"/>
    <property type="match status" value="1"/>
</dbReference>
<dbReference type="Pfam" id="PF04934">
    <property type="entry name" value="Med6"/>
    <property type="match status" value="1"/>
</dbReference>
<dbReference type="PIRSF" id="PIRSF023869">
    <property type="entry name" value="Mediator_MED6_meta/pln"/>
    <property type="match status" value="1"/>
</dbReference>
<reference key="1">
    <citation type="submission" date="2004-06" db="EMBL/GenBank/DDBJ databases">
        <authorList>
            <consortium name="NIH - Zebrafish Gene Collection (ZGC) project"/>
        </authorList>
    </citation>
    <scope>NUCLEOTIDE SEQUENCE [LARGE SCALE MRNA]</scope>
    <source>
        <tissue>Embryo</tissue>
    </source>
</reference>
<accession>Q6IQ63</accession>
<feature type="chain" id="PRO_0000303043" description="Mediator of RNA polymerase II transcription subunit 6">
    <location>
        <begin position="1"/>
        <end position="254"/>
    </location>
</feature>
<feature type="region of interest" description="Disordered" evidence="2">
    <location>
        <begin position="190"/>
        <end position="254"/>
    </location>
</feature>
<feature type="compositionally biased region" description="Pro residues" evidence="2">
    <location>
        <begin position="227"/>
        <end position="245"/>
    </location>
</feature>
<proteinExistence type="evidence at transcript level"/>
<keyword id="KW-0010">Activator</keyword>
<keyword id="KW-0539">Nucleus</keyword>
<keyword id="KW-1185">Reference proteome</keyword>
<keyword id="KW-0804">Transcription</keyword>
<keyword id="KW-0805">Transcription regulation</keyword>
<protein>
    <recommendedName>
        <fullName>Mediator of RNA polymerase II transcription subunit 6</fullName>
    </recommendedName>
    <alternativeName>
        <fullName>Mediator complex subunit 6</fullName>
    </alternativeName>
</protein>
<organism>
    <name type="scientific">Danio rerio</name>
    <name type="common">Zebrafish</name>
    <name type="synonym">Brachydanio rerio</name>
    <dbReference type="NCBI Taxonomy" id="7955"/>
    <lineage>
        <taxon>Eukaryota</taxon>
        <taxon>Metazoa</taxon>
        <taxon>Chordata</taxon>
        <taxon>Craniata</taxon>
        <taxon>Vertebrata</taxon>
        <taxon>Euteleostomi</taxon>
        <taxon>Actinopterygii</taxon>
        <taxon>Neopterygii</taxon>
        <taxon>Teleostei</taxon>
        <taxon>Ostariophysi</taxon>
        <taxon>Cypriniformes</taxon>
        <taxon>Danionidae</taxon>
        <taxon>Danioninae</taxon>
        <taxon>Danio</taxon>
    </lineage>
</organism>